<reference key="1">
    <citation type="journal article" date="2004" name="J. Infect. Dis.">
        <title>Progress toward characterization of the group A Streptococcus metagenome: complete genome sequence of a macrolide-resistant serotype M6 strain.</title>
        <authorList>
            <person name="Banks D.J."/>
            <person name="Porcella S.F."/>
            <person name="Barbian K.D."/>
            <person name="Beres S.B."/>
            <person name="Philips L.E."/>
            <person name="Voyich J.M."/>
            <person name="DeLeo F.R."/>
            <person name="Martin J.M."/>
            <person name="Somerville G.A."/>
            <person name="Musser J.M."/>
        </authorList>
    </citation>
    <scope>NUCLEOTIDE SEQUENCE [LARGE SCALE GENOMIC DNA]</scope>
    <source>
        <strain>ATCC BAA-946 / MGAS10394</strain>
    </source>
</reference>
<accession>Q5X9F2</accession>
<gene>
    <name evidence="1" type="primary">argR2</name>
    <name type="ordered locus">M6_Spy1826</name>
</gene>
<name>ARGR2_STRP6</name>
<proteinExistence type="inferred from homology"/>
<organism>
    <name type="scientific">Streptococcus pyogenes serotype M6 (strain ATCC BAA-946 / MGAS10394)</name>
    <dbReference type="NCBI Taxonomy" id="286636"/>
    <lineage>
        <taxon>Bacteria</taxon>
        <taxon>Bacillati</taxon>
        <taxon>Bacillota</taxon>
        <taxon>Bacilli</taxon>
        <taxon>Lactobacillales</taxon>
        <taxon>Streptococcaceae</taxon>
        <taxon>Streptococcus</taxon>
    </lineage>
</organism>
<comment type="function">
    <text evidence="1">Regulates arginine biosynthesis genes.</text>
</comment>
<comment type="pathway">
    <text>Amino-acid biosynthesis; L-arginine biosynthesis [regulation].</text>
</comment>
<comment type="subcellular location">
    <subcellularLocation>
        <location evidence="1">Cytoplasm</location>
    </subcellularLocation>
</comment>
<comment type="similarity">
    <text evidence="1">Belongs to the ArgR family.</text>
</comment>
<sequence length="145" mass="16371">MNKMERQQQIKRIIQAEHIGTQEDIKNHLQKEGIVVTQATLSRDLREIGLLKLRDEQGKLYYSLSEHVATPFSPEVRFYVLKVDRAGFMLVLHTNLGEADVLANLIDNDAIEDILGTIAGADTLLVICRDEEIAKRFEKDLAAGL</sequence>
<protein>
    <recommendedName>
        <fullName evidence="1">Arginine repressor</fullName>
    </recommendedName>
</protein>
<evidence type="ECO:0000255" key="1">
    <source>
        <dbReference type="HAMAP-Rule" id="MF_00173"/>
    </source>
</evidence>
<feature type="chain" id="PRO_0000205133" description="Arginine repressor">
    <location>
        <begin position="1"/>
        <end position="145"/>
    </location>
</feature>
<dbReference type="EMBL" id="CP000003">
    <property type="protein sequence ID" value="AAT87961.1"/>
    <property type="molecule type" value="Genomic_DNA"/>
</dbReference>
<dbReference type="RefSeq" id="WP_011185080.1">
    <property type="nucleotide sequence ID" value="NC_006086.1"/>
</dbReference>
<dbReference type="SMR" id="Q5X9F2"/>
<dbReference type="KEGG" id="spa:M6_Spy1826"/>
<dbReference type="HOGENOM" id="CLU_097103_3_0_9"/>
<dbReference type="UniPathway" id="UPA00068"/>
<dbReference type="Proteomes" id="UP000001167">
    <property type="component" value="Chromosome"/>
</dbReference>
<dbReference type="GO" id="GO:0005737">
    <property type="term" value="C:cytoplasm"/>
    <property type="evidence" value="ECO:0007669"/>
    <property type="project" value="UniProtKB-SubCell"/>
</dbReference>
<dbReference type="GO" id="GO:0034618">
    <property type="term" value="F:arginine binding"/>
    <property type="evidence" value="ECO:0007669"/>
    <property type="project" value="InterPro"/>
</dbReference>
<dbReference type="GO" id="GO:0003677">
    <property type="term" value="F:DNA binding"/>
    <property type="evidence" value="ECO:0007669"/>
    <property type="project" value="UniProtKB-KW"/>
</dbReference>
<dbReference type="GO" id="GO:0003700">
    <property type="term" value="F:DNA-binding transcription factor activity"/>
    <property type="evidence" value="ECO:0007669"/>
    <property type="project" value="UniProtKB-UniRule"/>
</dbReference>
<dbReference type="GO" id="GO:0006526">
    <property type="term" value="P:L-arginine biosynthetic process"/>
    <property type="evidence" value="ECO:0007669"/>
    <property type="project" value="UniProtKB-UniPathway"/>
</dbReference>
<dbReference type="GO" id="GO:0051259">
    <property type="term" value="P:protein complex oligomerization"/>
    <property type="evidence" value="ECO:0007669"/>
    <property type="project" value="InterPro"/>
</dbReference>
<dbReference type="GO" id="GO:1900079">
    <property type="term" value="P:regulation of arginine biosynthetic process"/>
    <property type="evidence" value="ECO:0007669"/>
    <property type="project" value="UniProtKB-UniRule"/>
</dbReference>
<dbReference type="Gene3D" id="3.30.1360.40">
    <property type="match status" value="1"/>
</dbReference>
<dbReference type="Gene3D" id="1.10.10.10">
    <property type="entry name" value="Winged helix-like DNA-binding domain superfamily/Winged helix DNA-binding domain"/>
    <property type="match status" value="1"/>
</dbReference>
<dbReference type="HAMAP" id="MF_00173">
    <property type="entry name" value="Arg_repressor"/>
    <property type="match status" value="1"/>
</dbReference>
<dbReference type="InterPro" id="IPR001669">
    <property type="entry name" value="Arg_repress"/>
</dbReference>
<dbReference type="InterPro" id="IPR020899">
    <property type="entry name" value="Arg_repress_C"/>
</dbReference>
<dbReference type="InterPro" id="IPR036251">
    <property type="entry name" value="Arg_repress_C_sf"/>
</dbReference>
<dbReference type="InterPro" id="IPR020900">
    <property type="entry name" value="Arg_repress_DNA-bd"/>
</dbReference>
<dbReference type="InterPro" id="IPR036388">
    <property type="entry name" value="WH-like_DNA-bd_sf"/>
</dbReference>
<dbReference type="InterPro" id="IPR036390">
    <property type="entry name" value="WH_DNA-bd_sf"/>
</dbReference>
<dbReference type="NCBIfam" id="TIGR01529">
    <property type="entry name" value="argR_whole"/>
    <property type="match status" value="1"/>
</dbReference>
<dbReference type="PANTHER" id="PTHR34471">
    <property type="entry name" value="ARGININE REPRESSOR"/>
    <property type="match status" value="1"/>
</dbReference>
<dbReference type="PANTHER" id="PTHR34471:SF1">
    <property type="entry name" value="ARGININE REPRESSOR"/>
    <property type="match status" value="1"/>
</dbReference>
<dbReference type="Pfam" id="PF01316">
    <property type="entry name" value="Arg_repressor"/>
    <property type="match status" value="1"/>
</dbReference>
<dbReference type="Pfam" id="PF02863">
    <property type="entry name" value="Arg_repressor_C"/>
    <property type="match status" value="1"/>
</dbReference>
<dbReference type="PRINTS" id="PR01467">
    <property type="entry name" value="ARGREPRESSOR"/>
</dbReference>
<dbReference type="SUPFAM" id="SSF55252">
    <property type="entry name" value="C-terminal domain of arginine repressor"/>
    <property type="match status" value="1"/>
</dbReference>
<dbReference type="SUPFAM" id="SSF46785">
    <property type="entry name" value="Winged helix' DNA-binding domain"/>
    <property type="match status" value="1"/>
</dbReference>
<keyword id="KW-0028">Amino-acid biosynthesis</keyword>
<keyword id="KW-0055">Arginine biosynthesis</keyword>
<keyword id="KW-0963">Cytoplasm</keyword>
<keyword id="KW-0238">DNA-binding</keyword>
<keyword id="KW-0678">Repressor</keyword>
<keyword id="KW-0804">Transcription</keyword>
<keyword id="KW-0805">Transcription regulation</keyword>